<evidence type="ECO:0000255" key="1">
    <source>
        <dbReference type="HAMAP-Rule" id="MF_01108"/>
    </source>
</evidence>
<evidence type="ECO:0000305" key="2"/>
<accession>Q9KNT5</accession>
<reference key="1">
    <citation type="journal article" date="2000" name="Nature">
        <title>DNA sequence of both chromosomes of the cholera pathogen Vibrio cholerae.</title>
        <authorList>
            <person name="Heidelberg J.F."/>
            <person name="Eisen J.A."/>
            <person name="Nelson W.C."/>
            <person name="Clayton R.A."/>
            <person name="Gwinn M.L."/>
            <person name="Dodson R.J."/>
            <person name="Haft D.H."/>
            <person name="Hickey E.K."/>
            <person name="Peterson J.D."/>
            <person name="Umayam L.A."/>
            <person name="Gill S.R."/>
            <person name="Nelson K.E."/>
            <person name="Read T.D."/>
            <person name="Tettelin H."/>
            <person name="Richardson D.L."/>
            <person name="Ermolaeva M.D."/>
            <person name="Vamathevan J.J."/>
            <person name="Bass S."/>
            <person name="Qin H."/>
            <person name="Dragoi I."/>
            <person name="Sellers P."/>
            <person name="McDonald L.A."/>
            <person name="Utterback T.R."/>
            <person name="Fleischmann R.D."/>
            <person name="Nierman W.C."/>
            <person name="White O."/>
            <person name="Salzberg S.L."/>
            <person name="Smith H.O."/>
            <person name="Colwell R.R."/>
            <person name="Mekalanos J.J."/>
            <person name="Venter J.C."/>
            <person name="Fraser C.M."/>
        </authorList>
    </citation>
    <scope>NUCLEOTIDE SEQUENCE [LARGE SCALE GENOMIC DNA]</scope>
    <source>
        <strain>ATCC 39315 / El Tor Inaba N16961</strain>
    </source>
</reference>
<proteinExistence type="inferred from homology"/>
<dbReference type="EC" id="3.5.1.16" evidence="1"/>
<dbReference type="EMBL" id="AE003852">
    <property type="protein sequence ID" value="AAF95786.1"/>
    <property type="molecule type" value="Genomic_DNA"/>
</dbReference>
<dbReference type="PIR" id="C82049">
    <property type="entry name" value="C82049"/>
</dbReference>
<dbReference type="RefSeq" id="NP_232273.1">
    <property type="nucleotide sequence ID" value="NC_002505.1"/>
</dbReference>
<dbReference type="RefSeq" id="WP_001130865.1">
    <property type="nucleotide sequence ID" value="NZ_LT906614.1"/>
</dbReference>
<dbReference type="SMR" id="Q9KNT5"/>
<dbReference type="STRING" id="243277.VC_2645"/>
<dbReference type="DNASU" id="2615662"/>
<dbReference type="EnsemblBacteria" id="AAF95786">
    <property type="protein sequence ID" value="AAF95786"/>
    <property type="gene ID" value="VC_2645"/>
</dbReference>
<dbReference type="KEGG" id="vch:VC_2645"/>
<dbReference type="PATRIC" id="fig|243277.26.peg.2523"/>
<dbReference type="eggNOG" id="COG0624">
    <property type="taxonomic scope" value="Bacteria"/>
</dbReference>
<dbReference type="HOGENOM" id="CLU_021802_2_4_6"/>
<dbReference type="UniPathway" id="UPA00068">
    <property type="reaction ID" value="UER00110"/>
</dbReference>
<dbReference type="Proteomes" id="UP000000584">
    <property type="component" value="Chromosome 1"/>
</dbReference>
<dbReference type="GO" id="GO:0005737">
    <property type="term" value="C:cytoplasm"/>
    <property type="evidence" value="ECO:0007669"/>
    <property type="project" value="UniProtKB-SubCell"/>
</dbReference>
<dbReference type="GO" id="GO:0008777">
    <property type="term" value="F:acetylornithine deacetylase activity"/>
    <property type="evidence" value="ECO:0000318"/>
    <property type="project" value="GO_Central"/>
</dbReference>
<dbReference type="GO" id="GO:0008270">
    <property type="term" value="F:zinc ion binding"/>
    <property type="evidence" value="ECO:0007669"/>
    <property type="project" value="UniProtKB-UniRule"/>
</dbReference>
<dbReference type="GO" id="GO:0006526">
    <property type="term" value="P:L-arginine biosynthetic process"/>
    <property type="evidence" value="ECO:0000318"/>
    <property type="project" value="GO_Central"/>
</dbReference>
<dbReference type="CDD" id="cd03894">
    <property type="entry name" value="M20_ArgE"/>
    <property type="match status" value="1"/>
</dbReference>
<dbReference type="FunFam" id="3.30.70.360:FF:000003">
    <property type="entry name" value="Acetylornithine deacetylase"/>
    <property type="match status" value="1"/>
</dbReference>
<dbReference type="Gene3D" id="3.30.70.360">
    <property type="match status" value="1"/>
</dbReference>
<dbReference type="Gene3D" id="3.40.630.10">
    <property type="entry name" value="Zn peptidases"/>
    <property type="match status" value="1"/>
</dbReference>
<dbReference type="HAMAP" id="MF_01108">
    <property type="entry name" value="ArgE"/>
    <property type="match status" value="1"/>
</dbReference>
<dbReference type="InterPro" id="IPR010169">
    <property type="entry name" value="AcOrn-deacetyl"/>
</dbReference>
<dbReference type="InterPro" id="IPR001261">
    <property type="entry name" value="ArgE/DapE_CS"/>
</dbReference>
<dbReference type="InterPro" id="IPR036264">
    <property type="entry name" value="Bact_exopeptidase_dim_dom"/>
</dbReference>
<dbReference type="InterPro" id="IPR002933">
    <property type="entry name" value="Peptidase_M20"/>
</dbReference>
<dbReference type="InterPro" id="IPR011650">
    <property type="entry name" value="Peptidase_M20_dimer"/>
</dbReference>
<dbReference type="InterPro" id="IPR050072">
    <property type="entry name" value="Peptidase_M20A"/>
</dbReference>
<dbReference type="NCBIfam" id="TIGR01892">
    <property type="entry name" value="AcOrn-deacetyl"/>
    <property type="match status" value="1"/>
</dbReference>
<dbReference type="NCBIfam" id="NF003474">
    <property type="entry name" value="PRK05111.1"/>
    <property type="match status" value="1"/>
</dbReference>
<dbReference type="PANTHER" id="PTHR43808">
    <property type="entry name" value="ACETYLORNITHINE DEACETYLASE"/>
    <property type="match status" value="1"/>
</dbReference>
<dbReference type="PANTHER" id="PTHR43808:SF1">
    <property type="entry name" value="ACETYLORNITHINE DEACETYLASE"/>
    <property type="match status" value="1"/>
</dbReference>
<dbReference type="Pfam" id="PF07687">
    <property type="entry name" value="M20_dimer"/>
    <property type="match status" value="1"/>
</dbReference>
<dbReference type="Pfam" id="PF01546">
    <property type="entry name" value="Peptidase_M20"/>
    <property type="match status" value="1"/>
</dbReference>
<dbReference type="SUPFAM" id="SSF55031">
    <property type="entry name" value="Bacterial exopeptidase dimerisation domain"/>
    <property type="match status" value="1"/>
</dbReference>
<dbReference type="SUPFAM" id="SSF53187">
    <property type="entry name" value="Zn-dependent exopeptidases"/>
    <property type="match status" value="1"/>
</dbReference>
<dbReference type="PROSITE" id="PS00758">
    <property type="entry name" value="ARGE_DAPE_CPG2_1"/>
    <property type="match status" value="1"/>
</dbReference>
<dbReference type="PROSITE" id="PS00759">
    <property type="entry name" value="ARGE_DAPE_CPG2_2"/>
    <property type="match status" value="1"/>
</dbReference>
<organism>
    <name type="scientific">Vibrio cholerae serotype O1 (strain ATCC 39315 / El Tor Inaba N16961)</name>
    <dbReference type="NCBI Taxonomy" id="243277"/>
    <lineage>
        <taxon>Bacteria</taxon>
        <taxon>Pseudomonadati</taxon>
        <taxon>Pseudomonadota</taxon>
        <taxon>Gammaproteobacteria</taxon>
        <taxon>Vibrionales</taxon>
        <taxon>Vibrionaceae</taxon>
        <taxon>Vibrio</taxon>
    </lineage>
</organism>
<protein>
    <recommendedName>
        <fullName evidence="1">Acetylornithine deacetylase</fullName>
        <shortName evidence="1">AO</shortName>
        <shortName evidence="1">Acetylornithinase</shortName>
        <ecNumber evidence="1">3.5.1.16</ecNumber>
    </recommendedName>
    <alternativeName>
        <fullName evidence="1">N-acetylornithinase</fullName>
        <shortName evidence="1">NAO</shortName>
    </alternativeName>
</protein>
<feature type="chain" id="PRO_0000185251" description="Acetylornithine deacetylase">
    <location>
        <begin position="1"/>
        <end position="378"/>
    </location>
</feature>
<feature type="active site" evidence="1">
    <location>
        <position position="78"/>
    </location>
</feature>
<feature type="active site" evidence="1">
    <location>
        <position position="140"/>
    </location>
</feature>
<feature type="binding site" evidence="1">
    <location>
        <position position="76"/>
    </location>
    <ligand>
        <name>Zn(2+)</name>
        <dbReference type="ChEBI" id="CHEBI:29105"/>
        <label>1</label>
    </ligand>
</feature>
<feature type="binding site" evidence="1">
    <location>
        <position position="108"/>
    </location>
    <ligand>
        <name>Zn(2+)</name>
        <dbReference type="ChEBI" id="CHEBI:29105"/>
        <label>1</label>
    </ligand>
</feature>
<feature type="binding site" evidence="1">
    <location>
        <position position="108"/>
    </location>
    <ligand>
        <name>Zn(2+)</name>
        <dbReference type="ChEBI" id="CHEBI:29105"/>
        <label>2</label>
    </ligand>
</feature>
<feature type="binding site" evidence="1">
    <location>
        <position position="141"/>
    </location>
    <ligand>
        <name>Zn(2+)</name>
        <dbReference type="ChEBI" id="CHEBI:29105"/>
        <label>2</label>
    </ligand>
</feature>
<feature type="binding site" evidence="1">
    <location>
        <position position="165"/>
    </location>
    <ligand>
        <name>Zn(2+)</name>
        <dbReference type="ChEBI" id="CHEBI:29105"/>
        <label>1</label>
    </ligand>
</feature>
<feature type="binding site" evidence="1">
    <location>
        <position position="351"/>
    </location>
    <ligand>
        <name>Zn(2+)</name>
        <dbReference type="ChEBI" id="CHEBI:29105"/>
        <label>2</label>
    </ligand>
</feature>
<gene>
    <name evidence="1" type="primary">argE</name>
    <name type="ordered locus">VC_2645</name>
</gene>
<name>ARGE_VIBCH</name>
<sequence length="378" mass="41964">MPLPSFLEVYEGLISTSSISSTDARWDEGNEQVIAKLADWLSALGFSIQIEQVAPNKQNLIAKLGSGEGGLLLAGHSDTVPFDEGRWNYNPHALTQVNNRFYGLGTADMKGFFAFIYEAVKNVDWSKQTKPLYVLATCDEETTMLGARHFTENAPFKPDYCIIGEPTSLVPIRAHKGHVANAIRVTGKSGHSSNPALGVNAIEIMHEVLFALMQLRDRLIKEYHHPGFEIPTPTLNLGHIHGGDSPNRICGCCELHYDVRPLPGISLDGLDNLMHDALREVQQKWPGRIELVPLHDPIPGYECAHDHPFIHGISEICEQEAQTVNYCTEAPFLQQVCPTLVLGPGSIDQAHQPDEFLAFEFIDPTVRVLSRAMQKYCF</sequence>
<keyword id="KW-0028">Amino-acid biosynthesis</keyword>
<keyword id="KW-0055">Arginine biosynthesis</keyword>
<keyword id="KW-0170">Cobalt</keyword>
<keyword id="KW-0963">Cytoplasm</keyword>
<keyword id="KW-0378">Hydrolase</keyword>
<keyword id="KW-0479">Metal-binding</keyword>
<keyword id="KW-1185">Reference proteome</keyword>
<keyword id="KW-0862">Zinc</keyword>
<comment type="function">
    <text evidence="1">Catalyzes the hydrolysis of the amide bond of N(2)-acetylated L-amino acids. Cleaves the acetyl group from N-acetyl-L-ornithine to form L-ornithine, an intermediate in L-arginine biosynthesis pathway, and a branchpoint in the synthesis of polyamines.</text>
</comment>
<comment type="catalytic activity">
    <reaction evidence="1">
        <text>N(2)-acetyl-L-ornithine + H2O = L-ornithine + acetate</text>
        <dbReference type="Rhea" id="RHEA:15941"/>
        <dbReference type="ChEBI" id="CHEBI:15377"/>
        <dbReference type="ChEBI" id="CHEBI:30089"/>
        <dbReference type="ChEBI" id="CHEBI:46911"/>
        <dbReference type="ChEBI" id="CHEBI:57805"/>
        <dbReference type="EC" id="3.5.1.16"/>
    </reaction>
</comment>
<comment type="cofactor">
    <cofactor evidence="1">
        <name>Zn(2+)</name>
        <dbReference type="ChEBI" id="CHEBI:29105"/>
    </cofactor>
    <cofactor evidence="1">
        <name>Co(2+)</name>
        <dbReference type="ChEBI" id="CHEBI:48828"/>
    </cofactor>
    <text evidence="1">Binds 2 Zn(2+) or Co(2+) ions per subunit.</text>
</comment>
<comment type="cofactor">
    <cofactor evidence="1">
        <name>glutathione</name>
        <dbReference type="ChEBI" id="CHEBI:57925"/>
    </cofactor>
</comment>
<comment type="pathway">
    <text evidence="1">Amino-acid biosynthesis; L-arginine biosynthesis; L-ornithine from N(2)-acetyl-L-ornithine (linear): step 1/1.</text>
</comment>
<comment type="subunit">
    <text evidence="1">Homodimer.</text>
</comment>
<comment type="subcellular location">
    <subcellularLocation>
        <location evidence="1">Cytoplasm</location>
    </subcellularLocation>
</comment>
<comment type="similarity">
    <text evidence="1 2">Belongs to the peptidase M20A family. ArgE subfamily.</text>
</comment>